<accession>P84595</accession>
<evidence type="ECO:0000250" key="1">
    <source>
        <dbReference type="UniProtKB" id="P84368"/>
    </source>
</evidence>
<evidence type="ECO:0000255" key="2"/>
<evidence type="ECO:0000269" key="3">
    <source>
    </source>
</evidence>
<evidence type="ECO:0000269" key="4">
    <source ref="2"/>
</evidence>
<evidence type="ECO:0000305" key="5"/>
<keyword id="KW-0027">Amidation</keyword>
<keyword id="KW-0903">Direct protein sequencing</keyword>
<keyword id="KW-0527">Neuropeptide</keyword>
<keyword id="KW-0964">Secreted</keyword>
<feature type="peptide" id="PRO_0000044340" description="Pyrokinin-5">
    <location>
        <begin position="1"/>
        <end position="17"/>
    </location>
</feature>
<feature type="modified residue" description="Leucine amide" evidence="3 4">
    <location>
        <position position="17"/>
    </location>
</feature>
<protein>
    <recommendedName>
        <fullName>Pyrokinin-5</fullName>
    </recommendedName>
    <alternativeName>
        <fullName>ArcTe-Capa-PK</fullName>
    </alternativeName>
    <alternativeName>
        <fullName>FXPRL-amide</fullName>
    </alternativeName>
</protein>
<organism>
    <name type="scientific">Archimandrita tessellata</name>
    <name type="common">Peppered roach</name>
    <name type="synonym">Giant cockroach</name>
    <dbReference type="NCBI Taxonomy" id="36945"/>
    <lineage>
        <taxon>Eukaryota</taxon>
        <taxon>Metazoa</taxon>
        <taxon>Ecdysozoa</taxon>
        <taxon>Arthropoda</taxon>
        <taxon>Hexapoda</taxon>
        <taxon>Insecta</taxon>
        <taxon>Pterygota</taxon>
        <taxon>Neoptera</taxon>
        <taxon>Polyneoptera</taxon>
        <taxon>Dictyoptera</taxon>
        <taxon>Blattodea</taxon>
        <taxon>Blaberoidea</taxon>
        <taxon>Blaberidae</taxon>
        <taxon>Blaberinae</taxon>
        <taxon>Archimandrita</taxon>
    </lineage>
</organism>
<reference key="1">
    <citation type="journal article" date="2009" name="BMC Evol. Biol.">
        <title>A proteomic approach for studying insect phylogeny: CAPA peptides of ancient insect taxa (Dictyoptera, Blattoptera) as a test case.</title>
        <authorList>
            <person name="Roth S."/>
            <person name="Fromm B."/>
            <person name="Gaede G."/>
            <person name="Predel R."/>
        </authorList>
    </citation>
    <scope>PROTEIN SEQUENCE</scope>
    <scope>AMIDATION AT LEU-17</scope>
    <source>
        <tissue>Abdominal perisympathetic organs</tissue>
    </source>
</reference>
<reference evidence="5" key="2">
    <citation type="submission" date="2005-05" db="UniProtKB">
        <authorList>
            <person name="Predel R."/>
        </authorList>
    </citation>
    <scope>PROTEIN SEQUENCE</scope>
    <scope>TISSUE SPECIFICITY</scope>
    <scope>MASS SPECTROMETRY</scope>
    <scope>AMIDATION AT LEU-17</scope>
    <source>
        <tissue evidence="3">Abdominal perisympathetic organs</tissue>
    </source>
</reference>
<sequence length="17" mass="1864">EGANSNEAKGMWFGPRL</sequence>
<comment type="function">
    <text evidence="1">Myoactive.</text>
</comment>
<comment type="subcellular location">
    <subcellularLocation>
        <location evidence="5">Secreted</location>
    </subcellularLocation>
</comment>
<comment type="tissue specificity">
    <text evidence="3 4">Expressed in abdominal perisympathetic organs and abdominal ganglia.</text>
</comment>
<comment type="mass spectrometry" mass="1862.897" method="MALDI" evidence="4"/>
<comment type="similarity">
    <text evidence="2">Belongs to the pyrokinin family.</text>
</comment>
<dbReference type="GO" id="GO:0005576">
    <property type="term" value="C:extracellular region"/>
    <property type="evidence" value="ECO:0007669"/>
    <property type="project" value="UniProtKB-SubCell"/>
</dbReference>
<dbReference type="GO" id="GO:0005184">
    <property type="term" value="F:neuropeptide hormone activity"/>
    <property type="evidence" value="ECO:0007669"/>
    <property type="project" value="InterPro"/>
</dbReference>
<dbReference type="GO" id="GO:0007218">
    <property type="term" value="P:neuropeptide signaling pathway"/>
    <property type="evidence" value="ECO:0007669"/>
    <property type="project" value="UniProtKB-KW"/>
</dbReference>
<dbReference type="InterPro" id="IPR001484">
    <property type="entry name" value="Pyrokinin_CS"/>
</dbReference>
<dbReference type="PROSITE" id="PS00539">
    <property type="entry name" value="PYROKININ"/>
    <property type="match status" value="1"/>
</dbReference>
<proteinExistence type="evidence at protein level"/>
<name>PPK5_ARCTE</name>